<organism>
    <name type="scientific">Ligilactobacillus salivarius (strain UCC118)</name>
    <name type="common">Lactobacillus salivarius</name>
    <dbReference type="NCBI Taxonomy" id="362948"/>
    <lineage>
        <taxon>Bacteria</taxon>
        <taxon>Bacillati</taxon>
        <taxon>Bacillota</taxon>
        <taxon>Bacilli</taxon>
        <taxon>Lactobacillales</taxon>
        <taxon>Lactobacillaceae</taxon>
        <taxon>Ligilactobacillus</taxon>
    </lineage>
</organism>
<comment type="function">
    <text evidence="1">Catalyzes the 2-thiolation of uridine at the wobble position (U34) of tRNA, leading to the formation of s(2)U34.</text>
</comment>
<comment type="catalytic activity">
    <reaction evidence="1">
        <text>S-sulfanyl-L-cysteinyl-[protein] + uridine(34) in tRNA + AH2 + ATP = 2-thiouridine(34) in tRNA + L-cysteinyl-[protein] + A + AMP + diphosphate + H(+)</text>
        <dbReference type="Rhea" id="RHEA:47032"/>
        <dbReference type="Rhea" id="RHEA-COMP:10131"/>
        <dbReference type="Rhea" id="RHEA-COMP:11726"/>
        <dbReference type="Rhea" id="RHEA-COMP:11727"/>
        <dbReference type="Rhea" id="RHEA-COMP:11728"/>
        <dbReference type="ChEBI" id="CHEBI:13193"/>
        <dbReference type="ChEBI" id="CHEBI:15378"/>
        <dbReference type="ChEBI" id="CHEBI:17499"/>
        <dbReference type="ChEBI" id="CHEBI:29950"/>
        <dbReference type="ChEBI" id="CHEBI:30616"/>
        <dbReference type="ChEBI" id="CHEBI:33019"/>
        <dbReference type="ChEBI" id="CHEBI:61963"/>
        <dbReference type="ChEBI" id="CHEBI:65315"/>
        <dbReference type="ChEBI" id="CHEBI:87170"/>
        <dbReference type="ChEBI" id="CHEBI:456215"/>
        <dbReference type="EC" id="2.8.1.13"/>
    </reaction>
</comment>
<comment type="subcellular location">
    <subcellularLocation>
        <location evidence="1">Cytoplasm</location>
    </subcellularLocation>
</comment>
<comment type="similarity">
    <text evidence="1">Belongs to the MnmA/TRMU family.</text>
</comment>
<name>MNMA_LIGS1</name>
<sequence length="375" mass="42328">MKDKSQIRVVVGMSGGVDSSVSAYLLKQQGYDVVGVFMKNWDDKNDSGVCTVTEDYQDVAKVASQIGIPYYSVNFEKEYWDRVFTYFLDEYKNGRTPNPDIMCNKEVKFKAFLDYAMSIDADYIAMGHYAQLRRDEDGRVHLLRGADDNKDQTYFLSQLSQEQLQKVMFPIGHLQKSEVRRIAEEAGLATAKKKDSTGICFIGERNFSKFLGEFLPAQPGEMVTLDGEVKGNHFGLMNYTIGQRKGLGIGGDGKSNEPWFVIGKDLKTNTLLVGQGYHNEHLYANSLDASKLSFVDDISDCGDEFHCTAKFRYRQKDTGVTVKFNEDRTKVEVIFDEPVRAITPGQEVVFYDGEECLGSGTIDHAYKESKLLQYV</sequence>
<accession>Q1WTT7</accession>
<proteinExistence type="inferred from homology"/>
<feature type="chain" id="PRO_1000009531" description="tRNA-specific 2-thiouridylase MnmA">
    <location>
        <begin position="1"/>
        <end position="375"/>
    </location>
</feature>
<feature type="region of interest" description="Interaction with target base in tRNA" evidence="1">
    <location>
        <begin position="98"/>
        <end position="100"/>
    </location>
</feature>
<feature type="region of interest" description="Interaction with tRNA" evidence="1">
    <location>
        <begin position="150"/>
        <end position="152"/>
    </location>
</feature>
<feature type="region of interest" description="Interaction with tRNA" evidence="1">
    <location>
        <begin position="312"/>
        <end position="313"/>
    </location>
</feature>
<feature type="active site" description="Nucleophile" evidence="1">
    <location>
        <position position="103"/>
    </location>
</feature>
<feature type="active site" description="Cysteine persulfide intermediate" evidence="1">
    <location>
        <position position="200"/>
    </location>
</feature>
<feature type="binding site" evidence="1">
    <location>
        <begin position="12"/>
        <end position="19"/>
    </location>
    <ligand>
        <name>ATP</name>
        <dbReference type="ChEBI" id="CHEBI:30616"/>
    </ligand>
</feature>
<feature type="binding site" evidence="1">
    <location>
        <position position="38"/>
    </location>
    <ligand>
        <name>ATP</name>
        <dbReference type="ChEBI" id="CHEBI:30616"/>
    </ligand>
</feature>
<feature type="binding site" evidence="1">
    <location>
        <position position="127"/>
    </location>
    <ligand>
        <name>ATP</name>
        <dbReference type="ChEBI" id="CHEBI:30616"/>
    </ligand>
</feature>
<feature type="site" description="Interaction with tRNA" evidence="1">
    <location>
        <position position="128"/>
    </location>
</feature>
<feature type="site" description="Interaction with tRNA" evidence="1">
    <location>
        <position position="346"/>
    </location>
</feature>
<feature type="disulfide bond" description="Alternate" evidence="1">
    <location>
        <begin position="103"/>
        <end position="200"/>
    </location>
</feature>
<dbReference type="EC" id="2.8.1.13" evidence="1"/>
<dbReference type="EMBL" id="CP000233">
    <property type="protein sequence ID" value="ABD99672.1"/>
    <property type="molecule type" value="Genomic_DNA"/>
</dbReference>
<dbReference type="RefSeq" id="WP_011476004.1">
    <property type="nucleotide sequence ID" value="NC_007929.1"/>
</dbReference>
<dbReference type="RefSeq" id="YP_535755.1">
    <property type="nucleotide sequence ID" value="NC_007929.1"/>
</dbReference>
<dbReference type="SMR" id="Q1WTT7"/>
<dbReference type="STRING" id="362948.LSL_0862"/>
<dbReference type="KEGG" id="lsl:LSL_0862"/>
<dbReference type="PATRIC" id="fig|362948.14.peg.937"/>
<dbReference type="HOGENOM" id="CLU_035188_1_0_9"/>
<dbReference type="OrthoDB" id="9800696at2"/>
<dbReference type="Proteomes" id="UP000006559">
    <property type="component" value="Chromosome"/>
</dbReference>
<dbReference type="GO" id="GO:0005737">
    <property type="term" value="C:cytoplasm"/>
    <property type="evidence" value="ECO:0007669"/>
    <property type="project" value="UniProtKB-SubCell"/>
</dbReference>
<dbReference type="GO" id="GO:0005524">
    <property type="term" value="F:ATP binding"/>
    <property type="evidence" value="ECO:0007669"/>
    <property type="project" value="UniProtKB-KW"/>
</dbReference>
<dbReference type="GO" id="GO:0000049">
    <property type="term" value="F:tRNA binding"/>
    <property type="evidence" value="ECO:0007669"/>
    <property type="project" value="UniProtKB-KW"/>
</dbReference>
<dbReference type="GO" id="GO:0103016">
    <property type="term" value="F:tRNA-uridine 2-sulfurtransferase activity"/>
    <property type="evidence" value="ECO:0007669"/>
    <property type="project" value="UniProtKB-EC"/>
</dbReference>
<dbReference type="GO" id="GO:0002143">
    <property type="term" value="P:tRNA wobble position uridine thiolation"/>
    <property type="evidence" value="ECO:0007669"/>
    <property type="project" value="TreeGrafter"/>
</dbReference>
<dbReference type="CDD" id="cd01998">
    <property type="entry name" value="MnmA_TRMU-like"/>
    <property type="match status" value="1"/>
</dbReference>
<dbReference type="FunFam" id="2.30.30.280:FF:000001">
    <property type="entry name" value="tRNA-specific 2-thiouridylase MnmA"/>
    <property type="match status" value="1"/>
</dbReference>
<dbReference type="FunFam" id="2.40.30.10:FF:000023">
    <property type="entry name" value="tRNA-specific 2-thiouridylase MnmA"/>
    <property type="match status" value="1"/>
</dbReference>
<dbReference type="FunFam" id="3.40.50.620:FF:000004">
    <property type="entry name" value="tRNA-specific 2-thiouridylase MnmA"/>
    <property type="match status" value="1"/>
</dbReference>
<dbReference type="Gene3D" id="2.30.30.280">
    <property type="entry name" value="Adenine nucleotide alpha hydrolases-like domains"/>
    <property type="match status" value="1"/>
</dbReference>
<dbReference type="Gene3D" id="3.40.50.620">
    <property type="entry name" value="HUPs"/>
    <property type="match status" value="1"/>
</dbReference>
<dbReference type="Gene3D" id="2.40.30.10">
    <property type="entry name" value="Translation factors"/>
    <property type="match status" value="1"/>
</dbReference>
<dbReference type="HAMAP" id="MF_00144">
    <property type="entry name" value="tRNA_thiouridyl_MnmA"/>
    <property type="match status" value="1"/>
</dbReference>
<dbReference type="InterPro" id="IPR004506">
    <property type="entry name" value="MnmA-like"/>
</dbReference>
<dbReference type="InterPro" id="IPR046885">
    <property type="entry name" value="MnmA-like_C"/>
</dbReference>
<dbReference type="InterPro" id="IPR046884">
    <property type="entry name" value="MnmA-like_central"/>
</dbReference>
<dbReference type="InterPro" id="IPR023382">
    <property type="entry name" value="MnmA-like_central_sf"/>
</dbReference>
<dbReference type="InterPro" id="IPR014729">
    <property type="entry name" value="Rossmann-like_a/b/a_fold"/>
</dbReference>
<dbReference type="NCBIfam" id="NF001138">
    <property type="entry name" value="PRK00143.1"/>
    <property type="match status" value="1"/>
</dbReference>
<dbReference type="NCBIfam" id="TIGR00420">
    <property type="entry name" value="trmU"/>
    <property type="match status" value="1"/>
</dbReference>
<dbReference type="PANTHER" id="PTHR11933:SF5">
    <property type="entry name" value="MITOCHONDRIAL TRNA-SPECIFIC 2-THIOURIDYLASE 1"/>
    <property type="match status" value="1"/>
</dbReference>
<dbReference type="PANTHER" id="PTHR11933">
    <property type="entry name" value="TRNA 5-METHYLAMINOMETHYL-2-THIOURIDYLATE -METHYLTRANSFERASE"/>
    <property type="match status" value="1"/>
</dbReference>
<dbReference type="Pfam" id="PF03054">
    <property type="entry name" value="tRNA_Me_trans"/>
    <property type="match status" value="1"/>
</dbReference>
<dbReference type="Pfam" id="PF20258">
    <property type="entry name" value="tRNA_Me_trans_C"/>
    <property type="match status" value="1"/>
</dbReference>
<dbReference type="Pfam" id="PF20259">
    <property type="entry name" value="tRNA_Me_trans_M"/>
    <property type="match status" value="1"/>
</dbReference>
<dbReference type="SUPFAM" id="SSF52402">
    <property type="entry name" value="Adenine nucleotide alpha hydrolases-like"/>
    <property type="match status" value="1"/>
</dbReference>
<reference key="1">
    <citation type="journal article" date="2006" name="Proc. Natl. Acad. Sci. U.S.A.">
        <title>Multireplicon genome architecture of Lactobacillus salivarius.</title>
        <authorList>
            <person name="Claesson M.J."/>
            <person name="Li Y."/>
            <person name="Leahy S."/>
            <person name="Canchaya C."/>
            <person name="van Pijkeren J.P."/>
            <person name="Cerdeno-Tarraga A.M."/>
            <person name="Parkhill J."/>
            <person name="Flynn S."/>
            <person name="O'Sullivan G.C."/>
            <person name="Collins J.K."/>
            <person name="Higgins D."/>
            <person name="Shanahan F."/>
            <person name="Fitzgerald G.F."/>
            <person name="van Sinderen D."/>
            <person name="O'Toole P.W."/>
        </authorList>
    </citation>
    <scope>NUCLEOTIDE SEQUENCE [LARGE SCALE GENOMIC DNA]</scope>
    <source>
        <strain>UCC118</strain>
    </source>
</reference>
<gene>
    <name evidence="1" type="primary">mnmA</name>
    <name type="synonym">trmU</name>
    <name type="ordered locus">LSL_0862</name>
</gene>
<keyword id="KW-0067">ATP-binding</keyword>
<keyword id="KW-0963">Cytoplasm</keyword>
<keyword id="KW-1015">Disulfide bond</keyword>
<keyword id="KW-0547">Nucleotide-binding</keyword>
<keyword id="KW-1185">Reference proteome</keyword>
<keyword id="KW-0694">RNA-binding</keyword>
<keyword id="KW-0808">Transferase</keyword>
<keyword id="KW-0819">tRNA processing</keyword>
<keyword id="KW-0820">tRNA-binding</keyword>
<protein>
    <recommendedName>
        <fullName evidence="1">tRNA-specific 2-thiouridylase MnmA</fullName>
        <ecNumber evidence="1">2.8.1.13</ecNumber>
    </recommendedName>
</protein>
<evidence type="ECO:0000255" key="1">
    <source>
        <dbReference type="HAMAP-Rule" id="MF_00144"/>
    </source>
</evidence>